<feature type="chain" id="PRO_1000018801" description="Phosphoribosylaminoimidazole-succinocarboxamide synthase">
    <location>
        <begin position="1"/>
        <end position="250"/>
    </location>
</feature>
<reference key="1">
    <citation type="submission" date="2006-05" db="EMBL/GenBank/DDBJ databases">
        <authorList>
            <consortium name="Genoscope"/>
        </authorList>
    </citation>
    <scope>NUCLEOTIDE SEQUENCE [LARGE SCALE GENOMIC DNA]</scope>
    <source>
        <strain>WH7803</strain>
    </source>
</reference>
<sequence>MTLSHGELLYEGKAKRIYASADDQQVLVEFKNDATAFNAQKKAQLEHKGRLNCQISACLFELLERHGIPTHYVGVADATWMVVQRVEVIPIEVVLRNTATGSLCRETPIPQGTALDPALLDLYYKDDALGDPLLTDARIALLGVVSAELRQRMEALARQVNAVLQPFFKDLGLQLVDFKLELGLNQAGELLVADEISPDTCRLWDLSSTDANERILDKDRFRKDLGGVIEAYGEVCKRVQGACPQPRNCG</sequence>
<evidence type="ECO:0000255" key="1">
    <source>
        <dbReference type="HAMAP-Rule" id="MF_00137"/>
    </source>
</evidence>
<keyword id="KW-0067">ATP-binding</keyword>
<keyword id="KW-0436">Ligase</keyword>
<keyword id="KW-0547">Nucleotide-binding</keyword>
<keyword id="KW-0658">Purine biosynthesis</keyword>
<keyword id="KW-1185">Reference proteome</keyword>
<proteinExistence type="inferred from homology"/>
<organism>
    <name type="scientific">Synechococcus sp. (strain WH7803)</name>
    <dbReference type="NCBI Taxonomy" id="32051"/>
    <lineage>
        <taxon>Bacteria</taxon>
        <taxon>Bacillati</taxon>
        <taxon>Cyanobacteriota</taxon>
        <taxon>Cyanophyceae</taxon>
        <taxon>Synechococcales</taxon>
        <taxon>Synechococcaceae</taxon>
        <taxon>Synechococcus</taxon>
    </lineage>
</organism>
<comment type="catalytic activity">
    <reaction evidence="1">
        <text>5-amino-1-(5-phospho-D-ribosyl)imidazole-4-carboxylate + L-aspartate + ATP = (2S)-2-[5-amino-1-(5-phospho-beta-D-ribosyl)imidazole-4-carboxamido]succinate + ADP + phosphate + 2 H(+)</text>
        <dbReference type="Rhea" id="RHEA:22628"/>
        <dbReference type="ChEBI" id="CHEBI:15378"/>
        <dbReference type="ChEBI" id="CHEBI:29991"/>
        <dbReference type="ChEBI" id="CHEBI:30616"/>
        <dbReference type="ChEBI" id="CHEBI:43474"/>
        <dbReference type="ChEBI" id="CHEBI:58443"/>
        <dbReference type="ChEBI" id="CHEBI:77657"/>
        <dbReference type="ChEBI" id="CHEBI:456216"/>
        <dbReference type="EC" id="6.3.2.6"/>
    </reaction>
</comment>
<comment type="pathway">
    <text evidence="1">Purine metabolism; IMP biosynthesis via de novo pathway; 5-amino-1-(5-phospho-D-ribosyl)imidazole-4-carboxamide from 5-amino-1-(5-phospho-D-ribosyl)imidazole-4-carboxylate: step 1/2.</text>
</comment>
<comment type="similarity">
    <text evidence="1">Belongs to the SAICAR synthetase family.</text>
</comment>
<name>PUR7_SYNPW</name>
<dbReference type="EC" id="6.3.2.6" evidence="1"/>
<dbReference type="EMBL" id="CT971583">
    <property type="protein sequence ID" value="CAK24386.1"/>
    <property type="molecule type" value="Genomic_DNA"/>
</dbReference>
<dbReference type="SMR" id="A5GN71"/>
<dbReference type="STRING" id="32051.SynWH7803_1960"/>
<dbReference type="KEGG" id="syx:SynWH7803_1960"/>
<dbReference type="eggNOG" id="COG0152">
    <property type="taxonomic scope" value="Bacteria"/>
</dbReference>
<dbReference type="HOGENOM" id="CLU_061495_2_0_3"/>
<dbReference type="OrthoDB" id="9801549at2"/>
<dbReference type="UniPathway" id="UPA00074">
    <property type="reaction ID" value="UER00131"/>
</dbReference>
<dbReference type="Proteomes" id="UP000001566">
    <property type="component" value="Chromosome"/>
</dbReference>
<dbReference type="GO" id="GO:0005524">
    <property type="term" value="F:ATP binding"/>
    <property type="evidence" value="ECO:0007669"/>
    <property type="project" value="UniProtKB-KW"/>
</dbReference>
<dbReference type="GO" id="GO:0004639">
    <property type="term" value="F:phosphoribosylaminoimidazolesuccinocarboxamide synthase activity"/>
    <property type="evidence" value="ECO:0007669"/>
    <property type="project" value="UniProtKB-UniRule"/>
</dbReference>
<dbReference type="GO" id="GO:0006189">
    <property type="term" value="P:'de novo' IMP biosynthetic process"/>
    <property type="evidence" value="ECO:0007669"/>
    <property type="project" value="UniProtKB-UniRule"/>
</dbReference>
<dbReference type="GO" id="GO:0009236">
    <property type="term" value="P:cobalamin biosynthetic process"/>
    <property type="evidence" value="ECO:0007669"/>
    <property type="project" value="InterPro"/>
</dbReference>
<dbReference type="CDD" id="cd01415">
    <property type="entry name" value="SAICAR_synt_PurC"/>
    <property type="match status" value="1"/>
</dbReference>
<dbReference type="Gene3D" id="3.30.470.20">
    <property type="entry name" value="ATP-grasp fold, B domain"/>
    <property type="match status" value="1"/>
</dbReference>
<dbReference type="Gene3D" id="3.30.200.20">
    <property type="entry name" value="Phosphorylase Kinase, domain 1"/>
    <property type="match status" value="1"/>
</dbReference>
<dbReference type="HAMAP" id="MF_00137">
    <property type="entry name" value="SAICAR_synth"/>
    <property type="match status" value="1"/>
</dbReference>
<dbReference type="InterPro" id="IPR028923">
    <property type="entry name" value="SAICAR_synt/ADE2_N"/>
</dbReference>
<dbReference type="InterPro" id="IPR033934">
    <property type="entry name" value="SAICAR_synt_PurC"/>
</dbReference>
<dbReference type="InterPro" id="IPR001636">
    <property type="entry name" value="SAICAR_synth"/>
</dbReference>
<dbReference type="InterPro" id="IPR050089">
    <property type="entry name" value="SAICAR_synthetase"/>
</dbReference>
<dbReference type="InterPro" id="IPR018236">
    <property type="entry name" value="SAICAR_synthetase_CS"/>
</dbReference>
<dbReference type="NCBIfam" id="TIGR00081">
    <property type="entry name" value="purC"/>
    <property type="match status" value="1"/>
</dbReference>
<dbReference type="PANTHER" id="PTHR43599">
    <property type="entry name" value="MULTIFUNCTIONAL PROTEIN ADE2"/>
    <property type="match status" value="1"/>
</dbReference>
<dbReference type="PANTHER" id="PTHR43599:SF3">
    <property type="entry name" value="SI:DKEY-6E2.2"/>
    <property type="match status" value="1"/>
</dbReference>
<dbReference type="Pfam" id="PF01259">
    <property type="entry name" value="SAICAR_synt"/>
    <property type="match status" value="1"/>
</dbReference>
<dbReference type="SUPFAM" id="SSF56104">
    <property type="entry name" value="SAICAR synthase-like"/>
    <property type="match status" value="1"/>
</dbReference>
<dbReference type="PROSITE" id="PS01057">
    <property type="entry name" value="SAICAR_SYNTHETASE_1"/>
    <property type="match status" value="1"/>
</dbReference>
<protein>
    <recommendedName>
        <fullName evidence="1">Phosphoribosylaminoimidazole-succinocarboxamide synthase</fullName>
        <ecNumber evidence="1">6.3.2.6</ecNumber>
    </recommendedName>
    <alternativeName>
        <fullName evidence="1">SAICAR synthetase</fullName>
    </alternativeName>
</protein>
<gene>
    <name evidence="1" type="primary">purC</name>
    <name type="ordered locus">SynWH7803_1960</name>
</gene>
<accession>A5GN71</accession>